<protein>
    <recommendedName>
        <fullName evidence="1">Elongation factor Ts</fullName>
        <shortName evidence="1">EF-Ts</shortName>
    </recommendedName>
</protein>
<name>EFTS_STRPI</name>
<sequence>MAEITAKLVKELREKSGAGVMDAKKALVETDGDIEKAIELLREKGMAKAAKKADRVAAEGLTGVYVNGNVAAVIEVNAETDFVAKNAQFVELVNTTAKVIAEGKPANNEEALALIMPSGETLEAAYVSATATIGEKISFRRFALIEKTDAQHFGAYQHNGGRIGVISVVEDGDEALAKQLSMHIAAMKPTVLSYKELDEQFVKDELAQLNHVIDQDNESRAMVNKPALPHLKYGSKAQLTDDVIAQAEADIKAELAAEGKPEKIWDKIIPGKMDRFMLDNTKVDQAYTLLAQVYIMDDSKTVEAYLESVNASVVEFARFEVGEGIEKAANDFEAEVAATMAAALNN</sequence>
<comment type="function">
    <text evidence="1">Associates with the EF-Tu.GDP complex and induces the exchange of GDP to GTP. It remains bound to the aminoacyl-tRNA.EF-Tu.GTP complex up to the GTP hydrolysis stage on the ribosome.</text>
</comment>
<comment type="subcellular location">
    <subcellularLocation>
        <location evidence="1">Cytoplasm</location>
    </subcellularLocation>
</comment>
<comment type="similarity">
    <text evidence="1">Belongs to the EF-Ts family.</text>
</comment>
<gene>
    <name evidence="1" type="primary">tsf</name>
    <name type="ordered locus">SPH_2409</name>
</gene>
<keyword id="KW-0963">Cytoplasm</keyword>
<keyword id="KW-0251">Elongation factor</keyword>
<keyword id="KW-0648">Protein biosynthesis</keyword>
<dbReference type="EMBL" id="CP000936">
    <property type="protein sequence ID" value="ACA35741.1"/>
    <property type="molecule type" value="Genomic_DNA"/>
</dbReference>
<dbReference type="RefSeq" id="WP_000808062.1">
    <property type="nucleotide sequence ID" value="NC_010380.1"/>
</dbReference>
<dbReference type="SMR" id="B1IAC7"/>
<dbReference type="KEGG" id="spv:SPH_2409"/>
<dbReference type="HOGENOM" id="CLU_047155_0_1_9"/>
<dbReference type="Proteomes" id="UP000002163">
    <property type="component" value="Chromosome"/>
</dbReference>
<dbReference type="GO" id="GO:0005737">
    <property type="term" value="C:cytoplasm"/>
    <property type="evidence" value="ECO:0007669"/>
    <property type="project" value="UniProtKB-SubCell"/>
</dbReference>
<dbReference type="GO" id="GO:0003746">
    <property type="term" value="F:translation elongation factor activity"/>
    <property type="evidence" value="ECO:0007669"/>
    <property type="project" value="UniProtKB-UniRule"/>
</dbReference>
<dbReference type="CDD" id="cd14275">
    <property type="entry name" value="UBA_EF-Ts"/>
    <property type="match status" value="1"/>
</dbReference>
<dbReference type="FunFam" id="1.10.286.20:FF:000004">
    <property type="entry name" value="Elongation factor Ts"/>
    <property type="match status" value="1"/>
</dbReference>
<dbReference type="FunFam" id="1.10.8.10:FF:000001">
    <property type="entry name" value="Elongation factor Ts"/>
    <property type="match status" value="1"/>
</dbReference>
<dbReference type="FunFam" id="3.30.479.20:FF:000009">
    <property type="entry name" value="Elongation factor Ts"/>
    <property type="match status" value="1"/>
</dbReference>
<dbReference type="FunFam" id="3.30.479.20:FF:000013">
    <property type="entry name" value="Elongation factor Ts"/>
    <property type="match status" value="1"/>
</dbReference>
<dbReference type="Gene3D" id="1.10.286.20">
    <property type="match status" value="1"/>
</dbReference>
<dbReference type="Gene3D" id="1.10.8.10">
    <property type="entry name" value="DNA helicase RuvA subunit, C-terminal domain"/>
    <property type="match status" value="1"/>
</dbReference>
<dbReference type="Gene3D" id="3.30.479.20">
    <property type="entry name" value="Elongation factor Ts, dimerisation domain"/>
    <property type="match status" value="2"/>
</dbReference>
<dbReference type="HAMAP" id="MF_00050">
    <property type="entry name" value="EF_Ts"/>
    <property type="match status" value="1"/>
</dbReference>
<dbReference type="InterPro" id="IPR036402">
    <property type="entry name" value="EF-Ts_dimer_sf"/>
</dbReference>
<dbReference type="InterPro" id="IPR001816">
    <property type="entry name" value="Transl_elong_EFTs/EF1B"/>
</dbReference>
<dbReference type="InterPro" id="IPR014039">
    <property type="entry name" value="Transl_elong_EFTs/EF1B_dimer"/>
</dbReference>
<dbReference type="InterPro" id="IPR018101">
    <property type="entry name" value="Transl_elong_Ts_CS"/>
</dbReference>
<dbReference type="InterPro" id="IPR009060">
    <property type="entry name" value="UBA-like_sf"/>
</dbReference>
<dbReference type="NCBIfam" id="TIGR00116">
    <property type="entry name" value="tsf"/>
    <property type="match status" value="1"/>
</dbReference>
<dbReference type="PANTHER" id="PTHR11741">
    <property type="entry name" value="ELONGATION FACTOR TS"/>
    <property type="match status" value="1"/>
</dbReference>
<dbReference type="PANTHER" id="PTHR11741:SF0">
    <property type="entry name" value="ELONGATION FACTOR TS, MITOCHONDRIAL"/>
    <property type="match status" value="1"/>
</dbReference>
<dbReference type="Pfam" id="PF00889">
    <property type="entry name" value="EF_TS"/>
    <property type="match status" value="1"/>
</dbReference>
<dbReference type="SUPFAM" id="SSF54713">
    <property type="entry name" value="Elongation factor Ts (EF-Ts), dimerisation domain"/>
    <property type="match status" value="2"/>
</dbReference>
<dbReference type="SUPFAM" id="SSF46934">
    <property type="entry name" value="UBA-like"/>
    <property type="match status" value="1"/>
</dbReference>
<dbReference type="PROSITE" id="PS01126">
    <property type="entry name" value="EF_TS_1"/>
    <property type="match status" value="1"/>
</dbReference>
<dbReference type="PROSITE" id="PS01127">
    <property type="entry name" value="EF_TS_2"/>
    <property type="match status" value="1"/>
</dbReference>
<feature type="chain" id="PRO_1000189881" description="Elongation factor Ts">
    <location>
        <begin position="1"/>
        <end position="346"/>
    </location>
</feature>
<feature type="region of interest" description="Involved in Mg(2+) ion dislocation from EF-Tu" evidence="1">
    <location>
        <begin position="80"/>
        <end position="83"/>
    </location>
</feature>
<evidence type="ECO:0000255" key="1">
    <source>
        <dbReference type="HAMAP-Rule" id="MF_00050"/>
    </source>
</evidence>
<organism>
    <name type="scientific">Streptococcus pneumoniae (strain Hungary19A-6)</name>
    <dbReference type="NCBI Taxonomy" id="487214"/>
    <lineage>
        <taxon>Bacteria</taxon>
        <taxon>Bacillati</taxon>
        <taxon>Bacillota</taxon>
        <taxon>Bacilli</taxon>
        <taxon>Lactobacillales</taxon>
        <taxon>Streptococcaceae</taxon>
        <taxon>Streptococcus</taxon>
    </lineage>
</organism>
<proteinExistence type="inferred from homology"/>
<accession>B1IAC7</accession>
<reference key="1">
    <citation type="journal article" date="2010" name="Genome Biol.">
        <title>Structure and dynamics of the pan-genome of Streptococcus pneumoniae and closely related species.</title>
        <authorList>
            <person name="Donati C."/>
            <person name="Hiller N.L."/>
            <person name="Tettelin H."/>
            <person name="Muzzi A."/>
            <person name="Croucher N.J."/>
            <person name="Angiuoli S.V."/>
            <person name="Oggioni M."/>
            <person name="Dunning Hotopp J.C."/>
            <person name="Hu F.Z."/>
            <person name="Riley D.R."/>
            <person name="Covacci A."/>
            <person name="Mitchell T.J."/>
            <person name="Bentley S.D."/>
            <person name="Kilian M."/>
            <person name="Ehrlich G.D."/>
            <person name="Rappuoli R."/>
            <person name="Moxon E.R."/>
            <person name="Masignani V."/>
        </authorList>
    </citation>
    <scope>NUCLEOTIDE SEQUENCE [LARGE SCALE GENOMIC DNA]</scope>
    <source>
        <strain>Hungary19A-6</strain>
    </source>
</reference>